<protein>
    <recommendedName>
        <fullName evidence="1">Histidinol dehydrogenase</fullName>
        <shortName evidence="1">HDH</shortName>
        <ecNumber evidence="1">1.1.1.23</ecNumber>
    </recommendedName>
</protein>
<dbReference type="EC" id="1.1.1.23" evidence="1"/>
<dbReference type="EMBL" id="BA000004">
    <property type="protein sequence ID" value="BAB07301.1"/>
    <property type="molecule type" value="Genomic_DNA"/>
</dbReference>
<dbReference type="PIR" id="F84097">
    <property type="entry name" value="F84097"/>
</dbReference>
<dbReference type="RefSeq" id="WP_010899710.1">
    <property type="nucleotide sequence ID" value="NC_002570.2"/>
</dbReference>
<dbReference type="SMR" id="Q9K6Z2"/>
<dbReference type="STRING" id="272558.gene:10729495"/>
<dbReference type="KEGG" id="bha:BH3582"/>
<dbReference type="eggNOG" id="COG0141">
    <property type="taxonomic scope" value="Bacteria"/>
</dbReference>
<dbReference type="HOGENOM" id="CLU_006732_3_3_9"/>
<dbReference type="OrthoDB" id="9805269at2"/>
<dbReference type="UniPathway" id="UPA00031">
    <property type="reaction ID" value="UER00014"/>
</dbReference>
<dbReference type="Proteomes" id="UP000001258">
    <property type="component" value="Chromosome"/>
</dbReference>
<dbReference type="GO" id="GO:0005829">
    <property type="term" value="C:cytosol"/>
    <property type="evidence" value="ECO:0007669"/>
    <property type="project" value="TreeGrafter"/>
</dbReference>
<dbReference type="GO" id="GO:0004399">
    <property type="term" value="F:histidinol dehydrogenase activity"/>
    <property type="evidence" value="ECO:0007669"/>
    <property type="project" value="UniProtKB-UniRule"/>
</dbReference>
<dbReference type="GO" id="GO:0051287">
    <property type="term" value="F:NAD binding"/>
    <property type="evidence" value="ECO:0007669"/>
    <property type="project" value="InterPro"/>
</dbReference>
<dbReference type="GO" id="GO:0008270">
    <property type="term" value="F:zinc ion binding"/>
    <property type="evidence" value="ECO:0007669"/>
    <property type="project" value="UniProtKB-UniRule"/>
</dbReference>
<dbReference type="GO" id="GO:0000105">
    <property type="term" value="P:L-histidine biosynthetic process"/>
    <property type="evidence" value="ECO:0007669"/>
    <property type="project" value="UniProtKB-UniRule"/>
</dbReference>
<dbReference type="CDD" id="cd06572">
    <property type="entry name" value="Histidinol_dh"/>
    <property type="match status" value="1"/>
</dbReference>
<dbReference type="FunFam" id="3.40.50.1980:FF:000001">
    <property type="entry name" value="Histidinol dehydrogenase"/>
    <property type="match status" value="1"/>
</dbReference>
<dbReference type="FunFam" id="3.40.50.1980:FF:000026">
    <property type="entry name" value="Histidinol dehydrogenase"/>
    <property type="match status" value="1"/>
</dbReference>
<dbReference type="Gene3D" id="1.20.5.1300">
    <property type="match status" value="1"/>
</dbReference>
<dbReference type="Gene3D" id="3.40.50.1980">
    <property type="entry name" value="Nitrogenase molybdenum iron protein domain"/>
    <property type="match status" value="2"/>
</dbReference>
<dbReference type="HAMAP" id="MF_01024">
    <property type="entry name" value="HisD"/>
    <property type="match status" value="1"/>
</dbReference>
<dbReference type="InterPro" id="IPR016161">
    <property type="entry name" value="Ald_DH/histidinol_DH"/>
</dbReference>
<dbReference type="InterPro" id="IPR001692">
    <property type="entry name" value="Histidinol_DH_CS"/>
</dbReference>
<dbReference type="InterPro" id="IPR022695">
    <property type="entry name" value="Histidinol_DH_monofunct"/>
</dbReference>
<dbReference type="InterPro" id="IPR012131">
    <property type="entry name" value="Hstdl_DH"/>
</dbReference>
<dbReference type="NCBIfam" id="TIGR00069">
    <property type="entry name" value="hisD"/>
    <property type="match status" value="1"/>
</dbReference>
<dbReference type="PANTHER" id="PTHR21256:SF2">
    <property type="entry name" value="HISTIDINE BIOSYNTHESIS TRIFUNCTIONAL PROTEIN"/>
    <property type="match status" value="1"/>
</dbReference>
<dbReference type="PANTHER" id="PTHR21256">
    <property type="entry name" value="HISTIDINOL DEHYDROGENASE HDH"/>
    <property type="match status" value="1"/>
</dbReference>
<dbReference type="Pfam" id="PF00815">
    <property type="entry name" value="Histidinol_dh"/>
    <property type="match status" value="1"/>
</dbReference>
<dbReference type="PIRSF" id="PIRSF000099">
    <property type="entry name" value="Histidinol_dh"/>
    <property type="match status" value="1"/>
</dbReference>
<dbReference type="PRINTS" id="PR00083">
    <property type="entry name" value="HOLDHDRGNASE"/>
</dbReference>
<dbReference type="SUPFAM" id="SSF53720">
    <property type="entry name" value="ALDH-like"/>
    <property type="match status" value="1"/>
</dbReference>
<dbReference type="PROSITE" id="PS00611">
    <property type="entry name" value="HISOL_DEHYDROGENASE"/>
    <property type="match status" value="1"/>
</dbReference>
<proteinExistence type="inferred from homology"/>
<comment type="function">
    <text evidence="1">Catalyzes the sequential NAD-dependent oxidations of L-histidinol to L-histidinaldehyde and then to L-histidine.</text>
</comment>
<comment type="catalytic activity">
    <reaction evidence="1">
        <text>L-histidinol + 2 NAD(+) + H2O = L-histidine + 2 NADH + 3 H(+)</text>
        <dbReference type="Rhea" id="RHEA:20641"/>
        <dbReference type="ChEBI" id="CHEBI:15377"/>
        <dbReference type="ChEBI" id="CHEBI:15378"/>
        <dbReference type="ChEBI" id="CHEBI:57540"/>
        <dbReference type="ChEBI" id="CHEBI:57595"/>
        <dbReference type="ChEBI" id="CHEBI:57699"/>
        <dbReference type="ChEBI" id="CHEBI:57945"/>
        <dbReference type="EC" id="1.1.1.23"/>
    </reaction>
</comment>
<comment type="cofactor">
    <cofactor evidence="1">
        <name>Zn(2+)</name>
        <dbReference type="ChEBI" id="CHEBI:29105"/>
    </cofactor>
    <text evidence="1">Binds 1 zinc ion per subunit.</text>
</comment>
<comment type="pathway">
    <text evidence="1">Amino-acid biosynthesis; L-histidine biosynthesis; L-histidine from 5-phospho-alpha-D-ribose 1-diphosphate: step 9/9.</text>
</comment>
<comment type="similarity">
    <text evidence="1">Belongs to the histidinol dehydrogenase family.</text>
</comment>
<organism>
    <name type="scientific">Halalkalibacterium halodurans (strain ATCC BAA-125 / DSM 18197 / FERM 7344 / JCM 9153 / C-125)</name>
    <name type="common">Bacillus halodurans</name>
    <dbReference type="NCBI Taxonomy" id="272558"/>
    <lineage>
        <taxon>Bacteria</taxon>
        <taxon>Bacillati</taxon>
        <taxon>Bacillota</taxon>
        <taxon>Bacilli</taxon>
        <taxon>Bacillales</taxon>
        <taxon>Bacillaceae</taxon>
        <taxon>Halalkalibacterium (ex Joshi et al. 2022)</taxon>
    </lineage>
</organism>
<sequence length="424" mass="45496">MKIVTINDSVSLKRDLDTGTDMQQNAVHSIIAQVREQGDQALFTLTKQFDGADLTTLRVQQAEIEAAYREMEEPVLQAIGEAIENIRDFHERQKRNSWMTTKSDGTILGQKITPLDSVGLYVPGGKAAYPSSIMMNVIPAQVAGVQNIVIVSPPQKDGSIPAGVLVTAAELGVKTILKVGGAQAIAALAYGTESVPAVDKITGPGNIYVALAKRAVFGHVDIDMIAGPSEIVVLADERANPRYIAADLLSQAEHDERASAILVTPSRALAEEVAVEVDQQLTTLPKREIAAASIRDYGAIYVTETLEEAVSVVNELAPEHLEILAEEPMSFLGKIRHAGAIFLGPYSSEPVGDYFAGPNHVLPTNGTARFSSPLNVDDFVKKSSIISYSKAALLENGAKISALARLEGLEAHARAIDIRLEDER</sequence>
<accession>Q9K6Z2</accession>
<reference key="1">
    <citation type="journal article" date="2000" name="Nucleic Acids Res.">
        <title>Complete genome sequence of the alkaliphilic bacterium Bacillus halodurans and genomic sequence comparison with Bacillus subtilis.</title>
        <authorList>
            <person name="Takami H."/>
            <person name="Nakasone K."/>
            <person name="Takaki Y."/>
            <person name="Maeno G."/>
            <person name="Sasaki R."/>
            <person name="Masui N."/>
            <person name="Fuji F."/>
            <person name="Hirama C."/>
            <person name="Nakamura Y."/>
            <person name="Ogasawara N."/>
            <person name="Kuhara S."/>
            <person name="Horikoshi K."/>
        </authorList>
    </citation>
    <scope>NUCLEOTIDE SEQUENCE [LARGE SCALE GENOMIC DNA]</scope>
    <source>
        <strain>ATCC BAA-125 / DSM 18197 / FERM 7344 / JCM 9153 / C-125</strain>
    </source>
</reference>
<gene>
    <name evidence="1" type="primary">hisD</name>
    <name type="ordered locus">BH3582</name>
</gene>
<evidence type="ECO:0000255" key="1">
    <source>
        <dbReference type="HAMAP-Rule" id="MF_01024"/>
    </source>
</evidence>
<name>HISX_HALH5</name>
<feature type="chain" id="PRO_0000135726" description="Histidinol dehydrogenase">
    <location>
        <begin position="1"/>
        <end position="424"/>
    </location>
</feature>
<feature type="active site" description="Proton acceptor" evidence="1">
    <location>
        <position position="319"/>
    </location>
</feature>
<feature type="active site" description="Proton acceptor" evidence="1">
    <location>
        <position position="320"/>
    </location>
</feature>
<feature type="binding site" evidence="1">
    <location>
        <position position="121"/>
    </location>
    <ligand>
        <name>NAD(+)</name>
        <dbReference type="ChEBI" id="CHEBI:57540"/>
    </ligand>
</feature>
<feature type="binding site" evidence="1">
    <location>
        <position position="183"/>
    </location>
    <ligand>
        <name>NAD(+)</name>
        <dbReference type="ChEBI" id="CHEBI:57540"/>
    </ligand>
</feature>
<feature type="binding site" evidence="1">
    <location>
        <position position="206"/>
    </location>
    <ligand>
        <name>NAD(+)</name>
        <dbReference type="ChEBI" id="CHEBI:57540"/>
    </ligand>
</feature>
<feature type="binding site" evidence="1">
    <location>
        <position position="229"/>
    </location>
    <ligand>
        <name>substrate</name>
    </ligand>
</feature>
<feature type="binding site" evidence="1">
    <location>
        <position position="251"/>
    </location>
    <ligand>
        <name>substrate</name>
    </ligand>
</feature>
<feature type="binding site" evidence="1">
    <location>
        <position position="251"/>
    </location>
    <ligand>
        <name>Zn(2+)</name>
        <dbReference type="ChEBI" id="CHEBI:29105"/>
    </ligand>
</feature>
<feature type="binding site" evidence="1">
    <location>
        <position position="254"/>
    </location>
    <ligand>
        <name>substrate</name>
    </ligand>
</feature>
<feature type="binding site" evidence="1">
    <location>
        <position position="254"/>
    </location>
    <ligand>
        <name>Zn(2+)</name>
        <dbReference type="ChEBI" id="CHEBI:29105"/>
    </ligand>
</feature>
<feature type="binding site" evidence="1">
    <location>
        <position position="320"/>
    </location>
    <ligand>
        <name>substrate</name>
    </ligand>
</feature>
<feature type="binding site" evidence="1">
    <location>
        <position position="353"/>
    </location>
    <ligand>
        <name>substrate</name>
    </ligand>
</feature>
<feature type="binding site" evidence="1">
    <location>
        <position position="353"/>
    </location>
    <ligand>
        <name>Zn(2+)</name>
        <dbReference type="ChEBI" id="CHEBI:29105"/>
    </ligand>
</feature>
<feature type="binding site" evidence="1">
    <location>
        <position position="407"/>
    </location>
    <ligand>
        <name>substrate</name>
    </ligand>
</feature>
<feature type="binding site" evidence="1">
    <location>
        <position position="412"/>
    </location>
    <ligand>
        <name>substrate</name>
    </ligand>
</feature>
<feature type="binding site" evidence="1">
    <location>
        <position position="412"/>
    </location>
    <ligand>
        <name>Zn(2+)</name>
        <dbReference type="ChEBI" id="CHEBI:29105"/>
    </ligand>
</feature>
<keyword id="KW-0028">Amino-acid biosynthesis</keyword>
<keyword id="KW-0368">Histidine biosynthesis</keyword>
<keyword id="KW-0479">Metal-binding</keyword>
<keyword id="KW-0520">NAD</keyword>
<keyword id="KW-0560">Oxidoreductase</keyword>
<keyword id="KW-1185">Reference proteome</keyword>
<keyword id="KW-0862">Zinc</keyword>